<gene>
    <name evidence="1" type="primary">rnhA</name>
    <name type="ordered locus">BSUIS_A0504</name>
</gene>
<proteinExistence type="inferred from homology"/>
<sequence>MKRIEAYTDGACSGNPGPGGWGALLRWNGNEKELKGGEAETTNNRMELMAAISALSALKEPCEVDLYTDSVYVRDGISGWIEGWKRNGWKTAAKKPVKNAELWQALDEARKAHKVTWHWIKGHAGHPENERADELARAGMEPFKYAGHRTLKVK</sequence>
<name>RNH_BRUSI</name>
<evidence type="ECO:0000255" key="1">
    <source>
        <dbReference type="HAMAP-Rule" id="MF_00042"/>
    </source>
</evidence>
<evidence type="ECO:0000255" key="2">
    <source>
        <dbReference type="PROSITE-ProRule" id="PRU00408"/>
    </source>
</evidence>
<dbReference type="EC" id="3.1.26.4" evidence="1"/>
<dbReference type="EMBL" id="CP000911">
    <property type="protein sequence ID" value="ABY37592.1"/>
    <property type="molecule type" value="Genomic_DNA"/>
</dbReference>
<dbReference type="RefSeq" id="WP_002963635.1">
    <property type="nucleotide sequence ID" value="NC_010169.1"/>
</dbReference>
<dbReference type="SMR" id="B0CKG2"/>
<dbReference type="GeneID" id="97534154"/>
<dbReference type="KEGG" id="bmt:BSUIS_A0504"/>
<dbReference type="HOGENOM" id="CLU_030894_6_0_5"/>
<dbReference type="Proteomes" id="UP000008545">
    <property type="component" value="Chromosome I"/>
</dbReference>
<dbReference type="GO" id="GO:0005737">
    <property type="term" value="C:cytoplasm"/>
    <property type="evidence" value="ECO:0007669"/>
    <property type="project" value="UniProtKB-SubCell"/>
</dbReference>
<dbReference type="GO" id="GO:0000287">
    <property type="term" value="F:magnesium ion binding"/>
    <property type="evidence" value="ECO:0007669"/>
    <property type="project" value="UniProtKB-UniRule"/>
</dbReference>
<dbReference type="GO" id="GO:0003676">
    <property type="term" value="F:nucleic acid binding"/>
    <property type="evidence" value="ECO:0007669"/>
    <property type="project" value="InterPro"/>
</dbReference>
<dbReference type="GO" id="GO:0004523">
    <property type="term" value="F:RNA-DNA hybrid ribonuclease activity"/>
    <property type="evidence" value="ECO:0007669"/>
    <property type="project" value="UniProtKB-UniRule"/>
</dbReference>
<dbReference type="GO" id="GO:0043137">
    <property type="term" value="P:DNA replication, removal of RNA primer"/>
    <property type="evidence" value="ECO:0007669"/>
    <property type="project" value="TreeGrafter"/>
</dbReference>
<dbReference type="CDD" id="cd09278">
    <property type="entry name" value="RNase_HI_prokaryote_like"/>
    <property type="match status" value="1"/>
</dbReference>
<dbReference type="FunFam" id="3.30.420.10:FF:000089">
    <property type="entry name" value="Ribonuclease H"/>
    <property type="match status" value="1"/>
</dbReference>
<dbReference type="Gene3D" id="3.30.420.10">
    <property type="entry name" value="Ribonuclease H-like superfamily/Ribonuclease H"/>
    <property type="match status" value="1"/>
</dbReference>
<dbReference type="HAMAP" id="MF_00042">
    <property type="entry name" value="RNase_H"/>
    <property type="match status" value="1"/>
</dbReference>
<dbReference type="InterPro" id="IPR050092">
    <property type="entry name" value="RNase_H"/>
</dbReference>
<dbReference type="InterPro" id="IPR012337">
    <property type="entry name" value="RNaseH-like_sf"/>
</dbReference>
<dbReference type="InterPro" id="IPR002156">
    <property type="entry name" value="RNaseH_domain"/>
</dbReference>
<dbReference type="InterPro" id="IPR036397">
    <property type="entry name" value="RNaseH_sf"/>
</dbReference>
<dbReference type="InterPro" id="IPR022892">
    <property type="entry name" value="RNaseHI"/>
</dbReference>
<dbReference type="NCBIfam" id="NF001236">
    <property type="entry name" value="PRK00203.1"/>
    <property type="match status" value="1"/>
</dbReference>
<dbReference type="PANTHER" id="PTHR10642">
    <property type="entry name" value="RIBONUCLEASE H1"/>
    <property type="match status" value="1"/>
</dbReference>
<dbReference type="PANTHER" id="PTHR10642:SF26">
    <property type="entry name" value="RIBONUCLEASE H1"/>
    <property type="match status" value="1"/>
</dbReference>
<dbReference type="Pfam" id="PF00075">
    <property type="entry name" value="RNase_H"/>
    <property type="match status" value="1"/>
</dbReference>
<dbReference type="SUPFAM" id="SSF53098">
    <property type="entry name" value="Ribonuclease H-like"/>
    <property type="match status" value="1"/>
</dbReference>
<dbReference type="PROSITE" id="PS50879">
    <property type="entry name" value="RNASE_H_1"/>
    <property type="match status" value="1"/>
</dbReference>
<comment type="function">
    <text evidence="1">Endonuclease that specifically degrades the RNA of RNA-DNA hybrids.</text>
</comment>
<comment type="catalytic activity">
    <reaction evidence="1">
        <text>Endonucleolytic cleavage to 5'-phosphomonoester.</text>
        <dbReference type="EC" id="3.1.26.4"/>
    </reaction>
</comment>
<comment type="cofactor">
    <cofactor evidence="1">
        <name>Mg(2+)</name>
        <dbReference type="ChEBI" id="CHEBI:18420"/>
    </cofactor>
    <text evidence="1">Binds 1 Mg(2+) ion per subunit. May bind a second metal ion at a regulatory site, or after substrate binding.</text>
</comment>
<comment type="subunit">
    <text evidence="1">Monomer.</text>
</comment>
<comment type="subcellular location">
    <subcellularLocation>
        <location evidence="1">Cytoplasm</location>
    </subcellularLocation>
</comment>
<comment type="similarity">
    <text evidence="1">Belongs to the RNase H family.</text>
</comment>
<protein>
    <recommendedName>
        <fullName evidence="1">Ribonuclease H</fullName>
        <shortName evidence="1">RNase H</shortName>
        <ecNumber evidence="1">3.1.26.4</ecNumber>
    </recommendedName>
</protein>
<keyword id="KW-0963">Cytoplasm</keyword>
<keyword id="KW-0255">Endonuclease</keyword>
<keyword id="KW-0378">Hydrolase</keyword>
<keyword id="KW-0460">Magnesium</keyword>
<keyword id="KW-0479">Metal-binding</keyword>
<keyword id="KW-0540">Nuclease</keyword>
<reference key="1">
    <citation type="submission" date="2007-12" db="EMBL/GenBank/DDBJ databases">
        <title>Brucella suis ATCC 23445 whole genome shotgun sequencing project.</title>
        <authorList>
            <person name="Setubal J.C."/>
            <person name="Bowns C."/>
            <person name="Boyle S."/>
            <person name="Crasta O.R."/>
            <person name="Czar M.J."/>
            <person name="Dharmanolla C."/>
            <person name="Gillespie J.J."/>
            <person name="Kenyon R.W."/>
            <person name="Lu J."/>
            <person name="Mane S."/>
            <person name="Mohapatra S."/>
            <person name="Nagrani S."/>
            <person name="Purkayastha A."/>
            <person name="Rajasimha H.K."/>
            <person name="Shallom J.M."/>
            <person name="Shallom S."/>
            <person name="Shukla M."/>
            <person name="Snyder E.E."/>
            <person name="Sobral B.W."/>
            <person name="Wattam A.R."/>
            <person name="Will R."/>
            <person name="Williams K."/>
            <person name="Yoo H."/>
            <person name="Bruce D."/>
            <person name="Detter C."/>
            <person name="Munk C."/>
            <person name="Brettin T.S."/>
        </authorList>
    </citation>
    <scope>NUCLEOTIDE SEQUENCE [LARGE SCALE GENOMIC DNA]</scope>
    <source>
        <strain>ATCC 23445 / NCTC 10510</strain>
    </source>
</reference>
<feature type="chain" id="PRO_0000332569" description="Ribonuclease H">
    <location>
        <begin position="1"/>
        <end position="154"/>
    </location>
</feature>
<feature type="domain" description="RNase H type-1" evidence="2">
    <location>
        <begin position="1"/>
        <end position="141"/>
    </location>
</feature>
<feature type="binding site" evidence="1">
    <location>
        <position position="9"/>
    </location>
    <ligand>
        <name>Mg(2+)</name>
        <dbReference type="ChEBI" id="CHEBI:18420"/>
        <label>1</label>
    </ligand>
</feature>
<feature type="binding site" evidence="1">
    <location>
        <position position="9"/>
    </location>
    <ligand>
        <name>Mg(2+)</name>
        <dbReference type="ChEBI" id="CHEBI:18420"/>
        <label>2</label>
    </ligand>
</feature>
<feature type="binding site" evidence="1">
    <location>
        <position position="47"/>
    </location>
    <ligand>
        <name>Mg(2+)</name>
        <dbReference type="ChEBI" id="CHEBI:18420"/>
        <label>1</label>
    </ligand>
</feature>
<feature type="binding site" evidence="1">
    <location>
        <position position="69"/>
    </location>
    <ligand>
        <name>Mg(2+)</name>
        <dbReference type="ChEBI" id="CHEBI:18420"/>
        <label>1</label>
    </ligand>
</feature>
<feature type="binding site" evidence="1">
    <location>
        <position position="133"/>
    </location>
    <ligand>
        <name>Mg(2+)</name>
        <dbReference type="ChEBI" id="CHEBI:18420"/>
        <label>2</label>
    </ligand>
</feature>
<organism>
    <name type="scientific">Brucella suis (strain ATCC 23445 / NCTC 10510)</name>
    <dbReference type="NCBI Taxonomy" id="470137"/>
    <lineage>
        <taxon>Bacteria</taxon>
        <taxon>Pseudomonadati</taxon>
        <taxon>Pseudomonadota</taxon>
        <taxon>Alphaproteobacteria</taxon>
        <taxon>Hyphomicrobiales</taxon>
        <taxon>Brucellaceae</taxon>
        <taxon>Brucella/Ochrobactrum group</taxon>
        <taxon>Brucella</taxon>
    </lineage>
</organism>
<accession>B0CKG2</accession>